<feature type="chain" id="PRO_0000225511" description="DNA-directed RNA polymerase subunit beta'">
    <location>
        <begin position="1"/>
        <end position="1203"/>
    </location>
</feature>
<feature type="binding site" evidence="1">
    <location>
        <position position="60"/>
    </location>
    <ligand>
        <name>Zn(2+)</name>
        <dbReference type="ChEBI" id="CHEBI:29105"/>
        <label>1</label>
    </ligand>
</feature>
<feature type="binding site" evidence="1">
    <location>
        <position position="62"/>
    </location>
    <ligand>
        <name>Zn(2+)</name>
        <dbReference type="ChEBI" id="CHEBI:29105"/>
        <label>1</label>
    </ligand>
</feature>
<feature type="binding site" evidence="1">
    <location>
        <position position="75"/>
    </location>
    <ligand>
        <name>Zn(2+)</name>
        <dbReference type="ChEBI" id="CHEBI:29105"/>
        <label>1</label>
    </ligand>
</feature>
<feature type="binding site" evidence="1">
    <location>
        <position position="78"/>
    </location>
    <ligand>
        <name>Zn(2+)</name>
        <dbReference type="ChEBI" id="CHEBI:29105"/>
        <label>1</label>
    </ligand>
</feature>
<feature type="binding site" evidence="1">
    <location>
        <position position="449"/>
    </location>
    <ligand>
        <name>Mg(2+)</name>
        <dbReference type="ChEBI" id="CHEBI:18420"/>
    </ligand>
</feature>
<feature type="binding site" evidence="1">
    <location>
        <position position="451"/>
    </location>
    <ligand>
        <name>Mg(2+)</name>
        <dbReference type="ChEBI" id="CHEBI:18420"/>
    </ligand>
</feature>
<feature type="binding site" evidence="1">
    <location>
        <position position="453"/>
    </location>
    <ligand>
        <name>Mg(2+)</name>
        <dbReference type="ChEBI" id="CHEBI:18420"/>
    </ligand>
</feature>
<feature type="binding site" evidence="1">
    <location>
        <position position="818"/>
    </location>
    <ligand>
        <name>Zn(2+)</name>
        <dbReference type="ChEBI" id="CHEBI:29105"/>
        <label>2</label>
    </ligand>
</feature>
<feature type="binding site" evidence="1">
    <location>
        <position position="892"/>
    </location>
    <ligand>
        <name>Zn(2+)</name>
        <dbReference type="ChEBI" id="CHEBI:29105"/>
        <label>2</label>
    </ligand>
</feature>
<feature type="binding site" evidence="1">
    <location>
        <position position="899"/>
    </location>
    <ligand>
        <name>Zn(2+)</name>
        <dbReference type="ChEBI" id="CHEBI:29105"/>
        <label>2</label>
    </ligand>
</feature>
<feature type="binding site" evidence="1">
    <location>
        <position position="902"/>
    </location>
    <ligand>
        <name>Zn(2+)</name>
        <dbReference type="ChEBI" id="CHEBI:29105"/>
        <label>2</label>
    </ligand>
</feature>
<organism>
    <name type="scientific">Bacillus thuringiensis subsp. konkukian (strain 97-27)</name>
    <dbReference type="NCBI Taxonomy" id="281309"/>
    <lineage>
        <taxon>Bacteria</taxon>
        <taxon>Bacillati</taxon>
        <taxon>Bacillota</taxon>
        <taxon>Bacilli</taxon>
        <taxon>Bacillales</taxon>
        <taxon>Bacillaceae</taxon>
        <taxon>Bacillus</taxon>
        <taxon>Bacillus cereus group</taxon>
    </lineage>
</organism>
<proteinExistence type="inferred from homology"/>
<name>RPOC_BACHK</name>
<reference key="1">
    <citation type="journal article" date="2006" name="J. Bacteriol.">
        <title>Pathogenomic sequence analysis of Bacillus cereus and Bacillus thuringiensis isolates closely related to Bacillus anthracis.</title>
        <authorList>
            <person name="Han C.S."/>
            <person name="Xie G."/>
            <person name="Challacombe J.F."/>
            <person name="Altherr M.R."/>
            <person name="Bhotika S.S."/>
            <person name="Bruce D."/>
            <person name="Campbell C.S."/>
            <person name="Campbell M.L."/>
            <person name="Chen J."/>
            <person name="Chertkov O."/>
            <person name="Cleland C."/>
            <person name="Dimitrijevic M."/>
            <person name="Doggett N.A."/>
            <person name="Fawcett J.J."/>
            <person name="Glavina T."/>
            <person name="Goodwin L.A."/>
            <person name="Hill K.K."/>
            <person name="Hitchcock P."/>
            <person name="Jackson P.J."/>
            <person name="Keim P."/>
            <person name="Kewalramani A.R."/>
            <person name="Longmire J."/>
            <person name="Lucas S."/>
            <person name="Malfatti S."/>
            <person name="McMurry K."/>
            <person name="Meincke L.J."/>
            <person name="Misra M."/>
            <person name="Moseman B.L."/>
            <person name="Mundt M."/>
            <person name="Munk A.C."/>
            <person name="Okinaka R.T."/>
            <person name="Parson-Quintana B."/>
            <person name="Reilly L.P."/>
            <person name="Richardson P."/>
            <person name="Robinson D.L."/>
            <person name="Rubin E."/>
            <person name="Saunders E."/>
            <person name="Tapia R."/>
            <person name="Tesmer J.G."/>
            <person name="Thayer N."/>
            <person name="Thompson L.S."/>
            <person name="Tice H."/>
            <person name="Ticknor L.O."/>
            <person name="Wills P.L."/>
            <person name="Brettin T.S."/>
            <person name="Gilna P."/>
        </authorList>
    </citation>
    <scope>NUCLEOTIDE SEQUENCE [LARGE SCALE GENOMIC DNA]</scope>
    <source>
        <strain>97-27</strain>
    </source>
</reference>
<comment type="function">
    <text evidence="1">DNA-dependent RNA polymerase catalyzes the transcription of DNA into RNA using the four ribonucleoside triphosphates as substrates.</text>
</comment>
<comment type="catalytic activity">
    <reaction evidence="1">
        <text>RNA(n) + a ribonucleoside 5'-triphosphate = RNA(n+1) + diphosphate</text>
        <dbReference type="Rhea" id="RHEA:21248"/>
        <dbReference type="Rhea" id="RHEA-COMP:14527"/>
        <dbReference type="Rhea" id="RHEA-COMP:17342"/>
        <dbReference type="ChEBI" id="CHEBI:33019"/>
        <dbReference type="ChEBI" id="CHEBI:61557"/>
        <dbReference type="ChEBI" id="CHEBI:140395"/>
        <dbReference type="EC" id="2.7.7.6"/>
    </reaction>
</comment>
<comment type="cofactor">
    <cofactor evidence="1">
        <name>Mg(2+)</name>
        <dbReference type="ChEBI" id="CHEBI:18420"/>
    </cofactor>
    <text evidence="1">Binds 1 Mg(2+) ion per subunit.</text>
</comment>
<comment type="cofactor">
    <cofactor evidence="1">
        <name>Zn(2+)</name>
        <dbReference type="ChEBI" id="CHEBI:29105"/>
    </cofactor>
    <text evidence="1">Binds 2 Zn(2+) ions per subunit.</text>
</comment>
<comment type="subunit">
    <text evidence="1">The RNAP catalytic core consists of 2 alpha, 1 beta, 1 beta' and 1 omega subunit. When a sigma factor is associated with the core the holoenzyme is formed, which can initiate transcription.</text>
</comment>
<comment type="similarity">
    <text evidence="1">Belongs to the RNA polymerase beta' chain family.</text>
</comment>
<sequence length="1203" mass="134421">MIDVNNFEYMKIGLASPDKIRSWSYGEVKKPETINYRTLKPEKDGLFCERIFGPQKDWECHCGKYKRVRYKGVVCDRCGVEVTRAKVRRERMGHIELAAPVSHIWYFKGIPSRMGLVLDMSPRALEEVIYFASYVVTESGDTPLDKKQLLSEKEYRAYRDRYGSTFQAAMGAEAIKKLLQDIDLDKEVDFLKEELKTAQGQRRTRAIKRLEVLEAFRNSGNEPSWMILDVLPVIPPELRPMVQLDGGRFATSDLNDLYRRVINRNNRLKRLLDLGAPSIIVQNEKRMLQEAVDALIDNGRRGRPVTGPGNRPLKSLSHMLKGKQGRFRQNLLGKRVDYSGRSVIVVGPNLKMYQCGLPKEMALELFKPFVMKELVEKGLAHNIKSAKRKIERVQPEVWDVLESVIKEHPVLLNRAPTLHRLGIQAFEPTLVEGRAIRLHPLVCTAYNADFDGDQMAVHVPLSSEAQAEARLLMLAAQNILNPKDGKPVVTPSQDMVLGNYYLTLEREGAIGEGMVFKDANEALLAYQNGYVHLHTRVAVAASAVNNATFTEEQKNMLLLTTVGKLIFNEILPESFPYINEPTNSNLEKETPAKYFVEKGANIKEIIASREEVAPFSKKILGNIIAEVFKRFKITETSRMLDRMKNLGFKYSTKAGITVGVSDILVLGEKDEILHEAQAKVDNVIKQFRRGLITEEERYDRVISIWSNAKDVIQGKLMKSLNKRNPIFMMSDSGARGNASNFTQLAGMRGLMANPSGRIIELPIKSSFREGLTVLEYFISTHGARKGLADTALKTADSGYLTRRLVDVAQDVIVREDDCGTDRGLLIGAIKEGNEVIESLYDRLVGRFARKTVKHPETGEVLVAENQLITEDIAHIVENSGVETVNIRSAFTCNTRHGVCKKCYGRNLATGTDVEVGEAVGIIAAQSIGEPGTQLTMRTFHTGGVAGDDITQGLPRIQEIFEARNPKGQAVISEIDGVIAAINDVKDRQEVVVQGEVEARTYAIPYGARLKVIPGQKISHGKELTEGSIDPKELLKVTDITAVQEYLLREVQKVYRMQGVEIGDKHVEVMVRQMLRKVRVSDAGETDVLPGTLLDIHQFTDANAKVLLQGKQPATARPVLLGITKASLETDSFLSAASFQETTRVLTDAAIKGKRDELLGLKENVIIGKLVPAGTGMNRYRKVDLVKTTQDDMNVENDEVYVEQ</sequence>
<evidence type="ECO:0000255" key="1">
    <source>
        <dbReference type="HAMAP-Rule" id="MF_01322"/>
    </source>
</evidence>
<keyword id="KW-0240">DNA-directed RNA polymerase</keyword>
<keyword id="KW-0460">Magnesium</keyword>
<keyword id="KW-0479">Metal-binding</keyword>
<keyword id="KW-0548">Nucleotidyltransferase</keyword>
<keyword id="KW-0804">Transcription</keyword>
<keyword id="KW-0808">Transferase</keyword>
<keyword id="KW-0862">Zinc</keyword>
<dbReference type="EC" id="2.7.7.6" evidence="1"/>
<dbReference type="EMBL" id="AE017355">
    <property type="protein sequence ID" value="AAT61487.1"/>
    <property type="molecule type" value="Genomic_DNA"/>
</dbReference>
<dbReference type="RefSeq" id="WP_000567936.1">
    <property type="nucleotide sequence ID" value="NC_005957.1"/>
</dbReference>
<dbReference type="RefSeq" id="YP_034455.1">
    <property type="nucleotide sequence ID" value="NC_005957.1"/>
</dbReference>
<dbReference type="SMR" id="Q6HPR5"/>
<dbReference type="KEGG" id="btk:BT9727_0099"/>
<dbReference type="PATRIC" id="fig|281309.8.peg.100"/>
<dbReference type="HOGENOM" id="CLU_000524_3_1_9"/>
<dbReference type="Proteomes" id="UP000001301">
    <property type="component" value="Chromosome"/>
</dbReference>
<dbReference type="GO" id="GO:0000428">
    <property type="term" value="C:DNA-directed RNA polymerase complex"/>
    <property type="evidence" value="ECO:0007669"/>
    <property type="project" value="UniProtKB-KW"/>
</dbReference>
<dbReference type="GO" id="GO:0003677">
    <property type="term" value="F:DNA binding"/>
    <property type="evidence" value="ECO:0007669"/>
    <property type="project" value="UniProtKB-UniRule"/>
</dbReference>
<dbReference type="GO" id="GO:0003899">
    <property type="term" value="F:DNA-directed RNA polymerase activity"/>
    <property type="evidence" value="ECO:0007669"/>
    <property type="project" value="UniProtKB-UniRule"/>
</dbReference>
<dbReference type="GO" id="GO:0000287">
    <property type="term" value="F:magnesium ion binding"/>
    <property type="evidence" value="ECO:0007669"/>
    <property type="project" value="UniProtKB-UniRule"/>
</dbReference>
<dbReference type="GO" id="GO:0008270">
    <property type="term" value="F:zinc ion binding"/>
    <property type="evidence" value="ECO:0007669"/>
    <property type="project" value="UniProtKB-UniRule"/>
</dbReference>
<dbReference type="GO" id="GO:0006351">
    <property type="term" value="P:DNA-templated transcription"/>
    <property type="evidence" value="ECO:0007669"/>
    <property type="project" value="UniProtKB-UniRule"/>
</dbReference>
<dbReference type="CDD" id="cd02655">
    <property type="entry name" value="RNAP_beta'_C"/>
    <property type="match status" value="1"/>
</dbReference>
<dbReference type="CDD" id="cd01609">
    <property type="entry name" value="RNAP_beta'_N"/>
    <property type="match status" value="1"/>
</dbReference>
<dbReference type="FunFam" id="1.10.150.390:FF:000002">
    <property type="entry name" value="DNA-directed RNA polymerase subunit beta"/>
    <property type="match status" value="1"/>
</dbReference>
<dbReference type="FunFam" id="1.10.40.90:FF:000001">
    <property type="entry name" value="DNA-directed RNA polymerase subunit beta"/>
    <property type="match status" value="1"/>
</dbReference>
<dbReference type="FunFam" id="4.10.860.120:FF:000001">
    <property type="entry name" value="DNA-directed RNA polymerase subunit beta"/>
    <property type="match status" value="1"/>
</dbReference>
<dbReference type="Gene3D" id="1.10.132.30">
    <property type="match status" value="1"/>
</dbReference>
<dbReference type="Gene3D" id="1.10.150.390">
    <property type="match status" value="1"/>
</dbReference>
<dbReference type="Gene3D" id="1.10.1790.20">
    <property type="match status" value="1"/>
</dbReference>
<dbReference type="Gene3D" id="1.10.40.90">
    <property type="match status" value="1"/>
</dbReference>
<dbReference type="Gene3D" id="2.40.40.20">
    <property type="match status" value="1"/>
</dbReference>
<dbReference type="Gene3D" id="2.40.50.100">
    <property type="match status" value="1"/>
</dbReference>
<dbReference type="Gene3D" id="4.10.860.120">
    <property type="entry name" value="RNA polymerase II, clamp domain"/>
    <property type="match status" value="1"/>
</dbReference>
<dbReference type="Gene3D" id="1.10.274.100">
    <property type="entry name" value="RNA polymerase Rpb1, domain 3"/>
    <property type="match status" value="1"/>
</dbReference>
<dbReference type="HAMAP" id="MF_01322">
    <property type="entry name" value="RNApol_bact_RpoC"/>
    <property type="match status" value="1"/>
</dbReference>
<dbReference type="InterPro" id="IPR045867">
    <property type="entry name" value="DNA-dir_RpoC_beta_prime"/>
</dbReference>
<dbReference type="InterPro" id="IPR012754">
    <property type="entry name" value="DNA-dir_RpoC_beta_prime_bact"/>
</dbReference>
<dbReference type="InterPro" id="IPR000722">
    <property type="entry name" value="RNA_pol_asu"/>
</dbReference>
<dbReference type="InterPro" id="IPR006592">
    <property type="entry name" value="RNA_pol_N"/>
</dbReference>
<dbReference type="InterPro" id="IPR007080">
    <property type="entry name" value="RNA_pol_Rpb1_1"/>
</dbReference>
<dbReference type="InterPro" id="IPR007066">
    <property type="entry name" value="RNA_pol_Rpb1_3"/>
</dbReference>
<dbReference type="InterPro" id="IPR042102">
    <property type="entry name" value="RNA_pol_Rpb1_3_sf"/>
</dbReference>
<dbReference type="InterPro" id="IPR007083">
    <property type="entry name" value="RNA_pol_Rpb1_4"/>
</dbReference>
<dbReference type="InterPro" id="IPR007081">
    <property type="entry name" value="RNA_pol_Rpb1_5"/>
</dbReference>
<dbReference type="InterPro" id="IPR044893">
    <property type="entry name" value="RNA_pol_Rpb1_clamp_domain"/>
</dbReference>
<dbReference type="InterPro" id="IPR038120">
    <property type="entry name" value="Rpb1_funnel_sf"/>
</dbReference>
<dbReference type="NCBIfam" id="TIGR02386">
    <property type="entry name" value="rpoC_TIGR"/>
    <property type="match status" value="1"/>
</dbReference>
<dbReference type="PANTHER" id="PTHR19376">
    <property type="entry name" value="DNA-DIRECTED RNA POLYMERASE"/>
    <property type="match status" value="1"/>
</dbReference>
<dbReference type="PANTHER" id="PTHR19376:SF54">
    <property type="entry name" value="DNA-DIRECTED RNA POLYMERASE SUBUNIT BETA"/>
    <property type="match status" value="1"/>
</dbReference>
<dbReference type="Pfam" id="PF04997">
    <property type="entry name" value="RNA_pol_Rpb1_1"/>
    <property type="match status" value="1"/>
</dbReference>
<dbReference type="Pfam" id="PF00623">
    <property type="entry name" value="RNA_pol_Rpb1_2"/>
    <property type="match status" value="2"/>
</dbReference>
<dbReference type="Pfam" id="PF04983">
    <property type="entry name" value="RNA_pol_Rpb1_3"/>
    <property type="match status" value="1"/>
</dbReference>
<dbReference type="Pfam" id="PF05000">
    <property type="entry name" value="RNA_pol_Rpb1_4"/>
    <property type="match status" value="1"/>
</dbReference>
<dbReference type="Pfam" id="PF04998">
    <property type="entry name" value="RNA_pol_Rpb1_5"/>
    <property type="match status" value="1"/>
</dbReference>
<dbReference type="SMART" id="SM00663">
    <property type="entry name" value="RPOLA_N"/>
    <property type="match status" value="1"/>
</dbReference>
<dbReference type="SUPFAM" id="SSF64484">
    <property type="entry name" value="beta and beta-prime subunits of DNA dependent RNA-polymerase"/>
    <property type="match status" value="1"/>
</dbReference>
<protein>
    <recommendedName>
        <fullName evidence="1">DNA-directed RNA polymerase subunit beta'</fullName>
        <shortName evidence="1">RNAP subunit beta'</shortName>
        <ecNumber evidence="1">2.7.7.6</ecNumber>
    </recommendedName>
    <alternativeName>
        <fullName evidence="1">RNA polymerase subunit beta'</fullName>
    </alternativeName>
    <alternativeName>
        <fullName evidence="1">Transcriptase subunit beta'</fullName>
    </alternativeName>
</protein>
<gene>
    <name evidence="1" type="primary">rpoC</name>
    <name type="ordered locus">BT9727_0099</name>
</gene>
<accession>Q6HPR5</accession>